<evidence type="ECO:0000255" key="1">
    <source>
        <dbReference type="PROSITE-ProRule" id="PRU00303"/>
    </source>
</evidence>
<sequence>MRPSRYAPLLCAMVLALAWLSAVAGCSRGGSSKAGRSSSVAGTLPAGVVGVSPAGVTTRVDAPAESTEEEYYQACHAARLWMDAQPGSGESLIEPYLAVVQASPSGVAGSWHIRWAALTPARQAAVIVAARAAANAECG</sequence>
<accession>P9WK56</accession>
<accession>L0T5L6</accession>
<accession>O53412</accession>
<accession>P65310</accession>
<feature type="signal peptide" evidence="1">
    <location>
        <begin position="1"/>
        <end position="25"/>
    </location>
</feature>
<feature type="chain" id="PRO_0000427712" description="Putative lipoprotein LpqV">
    <location>
        <begin position="26"/>
        <end position="139"/>
    </location>
</feature>
<feature type="lipid moiety-binding region" description="N-palmitoyl cysteine" evidence="1">
    <location>
        <position position="26"/>
    </location>
</feature>
<feature type="lipid moiety-binding region" description="S-diacylglycerol cysteine" evidence="1">
    <location>
        <position position="26"/>
    </location>
</feature>
<keyword id="KW-1003">Cell membrane</keyword>
<keyword id="KW-0449">Lipoprotein</keyword>
<keyword id="KW-0472">Membrane</keyword>
<keyword id="KW-0564">Palmitate</keyword>
<keyword id="KW-1185">Reference proteome</keyword>
<keyword id="KW-0732">Signal</keyword>
<protein>
    <recommendedName>
        <fullName>Putative lipoprotein LpqV</fullName>
    </recommendedName>
</protein>
<comment type="subcellular location">
    <subcellularLocation>
        <location evidence="1">Cell membrane</location>
        <topology evidence="1">Lipid-anchor</topology>
    </subcellularLocation>
</comment>
<reference key="1">
    <citation type="journal article" date="2002" name="J. Bacteriol.">
        <title>Whole-genome comparison of Mycobacterium tuberculosis clinical and laboratory strains.</title>
        <authorList>
            <person name="Fleischmann R.D."/>
            <person name="Alland D."/>
            <person name="Eisen J.A."/>
            <person name="Carpenter L."/>
            <person name="White O."/>
            <person name="Peterson J.D."/>
            <person name="DeBoy R.T."/>
            <person name="Dodson R.J."/>
            <person name="Gwinn M.L."/>
            <person name="Haft D.H."/>
            <person name="Hickey E.K."/>
            <person name="Kolonay J.F."/>
            <person name="Nelson W.C."/>
            <person name="Umayam L.A."/>
            <person name="Ermolaeva M.D."/>
            <person name="Salzberg S.L."/>
            <person name="Delcher A."/>
            <person name="Utterback T.R."/>
            <person name="Weidman J.F."/>
            <person name="Khouri H.M."/>
            <person name="Gill J."/>
            <person name="Mikula A."/>
            <person name="Bishai W."/>
            <person name="Jacobs W.R. Jr."/>
            <person name="Venter J.C."/>
            <person name="Fraser C.M."/>
        </authorList>
    </citation>
    <scope>NUCLEOTIDE SEQUENCE [LARGE SCALE GENOMIC DNA]</scope>
    <source>
        <strain>CDC 1551 / Oshkosh</strain>
    </source>
</reference>
<gene>
    <name type="primary">lpqV</name>
    <name type="ordered locus">MT1094</name>
</gene>
<proteinExistence type="inferred from homology"/>
<organism>
    <name type="scientific">Mycobacterium tuberculosis (strain CDC 1551 / Oshkosh)</name>
    <dbReference type="NCBI Taxonomy" id="83331"/>
    <lineage>
        <taxon>Bacteria</taxon>
        <taxon>Bacillati</taxon>
        <taxon>Actinomycetota</taxon>
        <taxon>Actinomycetes</taxon>
        <taxon>Mycobacteriales</taxon>
        <taxon>Mycobacteriaceae</taxon>
        <taxon>Mycobacterium</taxon>
        <taxon>Mycobacterium tuberculosis complex</taxon>
    </lineage>
</organism>
<name>LPQV_MYCTO</name>
<dbReference type="EMBL" id="AE000516">
    <property type="protein sequence ID" value="AAK45348.1"/>
    <property type="molecule type" value="Genomic_DNA"/>
</dbReference>
<dbReference type="PIR" id="F70892">
    <property type="entry name" value="F70892"/>
</dbReference>
<dbReference type="RefSeq" id="WP_003405645.1">
    <property type="nucleotide sequence ID" value="NZ_KK341227.1"/>
</dbReference>
<dbReference type="KEGG" id="mtc:MT1094"/>
<dbReference type="PATRIC" id="fig|83331.31.peg.1177"/>
<dbReference type="HOGENOM" id="CLU_147971_0_0_11"/>
<dbReference type="Proteomes" id="UP000001020">
    <property type="component" value="Chromosome"/>
</dbReference>
<dbReference type="GO" id="GO:0005886">
    <property type="term" value="C:plasma membrane"/>
    <property type="evidence" value="ECO:0007669"/>
    <property type="project" value="UniProtKB-SubCell"/>
</dbReference>
<dbReference type="InterPro" id="IPR020377">
    <property type="entry name" value="Uncharacterised_LpqV"/>
</dbReference>
<dbReference type="Pfam" id="PF17301">
    <property type="entry name" value="LpqV"/>
    <property type="match status" value="1"/>
</dbReference>
<dbReference type="PROSITE" id="PS51257">
    <property type="entry name" value="PROKAR_LIPOPROTEIN"/>
    <property type="match status" value="1"/>
</dbReference>